<evidence type="ECO:0000255" key="1">
    <source>
        <dbReference type="HAMAP-Rule" id="MF_01147"/>
    </source>
</evidence>
<evidence type="ECO:0000305" key="2"/>
<keyword id="KW-0997">Cell inner membrane</keyword>
<keyword id="KW-1003">Cell membrane</keyword>
<keyword id="KW-0472">Membrane</keyword>
<keyword id="KW-0808">Transferase</keyword>
<keyword id="KW-0812">Transmembrane</keyword>
<keyword id="KW-1133">Transmembrane helix</keyword>
<organism>
    <name type="scientific">Chlamydia muridarum (strain MoPn / Nigg)</name>
    <dbReference type="NCBI Taxonomy" id="243161"/>
    <lineage>
        <taxon>Bacteria</taxon>
        <taxon>Pseudomonadati</taxon>
        <taxon>Chlamydiota</taxon>
        <taxon>Chlamydiia</taxon>
        <taxon>Chlamydiales</taxon>
        <taxon>Chlamydiaceae</taxon>
        <taxon>Chlamydia/Chlamydophila group</taxon>
        <taxon>Chlamydia</taxon>
    </lineage>
</organism>
<gene>
    <name evidence="1" type="primary">lgt</name>
    <name type="ordered locus">TC_0523</name>
</gene>
<sequence>MIHWEQSRTLLSFPQVGLHLSWYGIFFSLGIFLSSFAGIRLATVLCKDPNMRKELKTGLENFALGALLVIVIGARAFYVLFYGGSFYFENPSEIIKIWKGGLSSHGAIIALVIWSAAFSRFHIRRLPMLSVTYICDICGAVFGVAALLIRVGNFMNQEILGTPTSMPWGVVFANDSSLIARHPVQLYEGVSYLLLSLVLYWLCYRGSIRLGSGYSAAGALIGVASIRFCAEFFKTHQGSWLGEESLLTIGQWLSIPMVFLGIGILWIASKKREP</sequence>
<proteinExistence type="inferred from homology"/>
<accession>Q9PKE2</accession>
<comment type="function">
    <text evidence="1">Catalyzes the transfer of the diacylglyceryl group from phosphatidylglycerol to the sulfhydryl group of the N-terminal cysteine of a prolipoprotein, the first step in the formation of mature lipoproteins.</text>
</comment>
<comment type="catalytic activity">
    <reaction evidence="1">
        <text>L-cysteinyl-[prolipoprotein] + a 1,2-diacyl-sn-glycero-3-phospho-(1'-sn-glycerol) = an S-1,2-diacyl-sn-glyceryl-L-cysteinyl-[prolipoprotein] + sn-glycerol 1-phosphate + H(+)</text>
        <dbReference type="Rhea" id="RHEA:56712"/>
        <dbReference type="Rhea" id="RHEA-COMP:14679"/>
        <dbReference type="Rhea" id="RHEA-COMP:14680"/>
        <dbReference type="ChEBI" id="CHEBI:15378"/>
        <dbReference type="ChEBI" id="CHEBI:29950"/>
        <dbReference type="ChEBI" id="CHEBI:57685"/>
        <dbReference type="ChEBI" id="CHEBI:64716"/>
        <dbReference type="ChEBI" id="CHEBI:140658"/>
        <dbReference type="EC" id="2.5.1.145"/>
    </reaction>
</comment>
<comment type="pathway">
    <text evidence="1">Protein modification; lipoprotein biosynthesis (diacylglyceryl transfer).</text>
</comment>
<comment type="subcellular location">
    <subcellularLocation>
        <location evidence="1">Cell inner membrane</location>
        <topology evidence="1">Multi-pass membrane protein</topology>
    </subcellularLocation>
</comment>
<comment type="similarity">
    <text evidence="1">Belongs to the Lgt family.</text>
</comment>
<comment type="sequence caution" evidence="2">
    <conflict type="erroneous initiation">
        <sequence resource="EMBL-CDS" id="AAF39365"/>
    </conflict>
</comment>
<name>LGT_CHLMU</name>
<feature type="chain" id="PRO_0000172580" description="Phosphatidylglycerol--prolipoprotein diacylglyceryl transferase">
    <location>
        <begin position="1"/>
        <end position="274"/>
    </location>
</feature>
<feature type="transmembrane region" description="Helical" evidence="1">
    <location>
        <begin position="16"/>
        <end position="36"/>
    </location>
</feature>
<feature type="transmembrane region" description="Helical" evidence="1">
    <location>
        <begin position="62"/>
        <end position="82"/>
    </location>
</feature>
<feature type="transmembrane region" description="Helical" evidence="1">
    <location>
        <begin position="94"/>
        <end position="114"/>
    </location>
</feature>
<feature type="transmembrane region" description="Helical" evidence="1">
    <location>
        <begin position="129"/>
        <end position="149"/>
    </location>
</feature>
<feature type="transmembrane region" description="Helical" evidence="1">
    <location>
        <begin position="184"/>
        <end position="204"/>
    </location>
</feature>
<feature type="transmembrane region" description="Helical" evidence="1">
    <location>
        <begin position="213"/>
        <end position="233"/>
    </location>
</feature>
<feature type="transmembrane region" description="Helical" evidence="1">
    <location>
        <begin position="247"/>
        <end position="267"/>
    </location>
</feature>
<feature type="binding site" evidence="1">
    <location>
        <position position="150"/>
    </location>
    <ligand>
        <name>a 1,2-diacyl-sn-glycero-3-phospho-(1'-sn-glycerol)</name>
        <dbReference type="ChEBI" id="CHEBI:64716"/>
    </ligand>
</feature>
<protein>
    <recommendedName>
        <fullName evidence="1">Phosphatidylglycerol--prolipoprotein diacylglyceryl transferase</fullName>
        <ecNumber evidence="1">2.5.1.145</ecNumber>
    </recommendedName>
</protein>
<reference key="1">
    <citation type="journal article" date="2000" name="Nucleic Acids Res.">
        <title>Genome sequences of Chlamydia trachomatis MoPn and Chlamydia pneumoniae AR39.</title>
        <authorList>
            <person name="Read T.D."/>
            <person name="Brunham R.C."/>
            <person name="Shen C."/>
            <person name="Gill S.R."/>
            <person name="Heidelberg J.F."/>
            <person name="White O."/>
            <person name="Hickey E.K."/>
            <person name="Peterson J.D."/>
            <person name="Utterback T.R."/>
            <person name="Berry K.J."/>
            <person name="Bass S."/>
            <person name="Linher K.D."/>
            <person name="Weidman J.F."/>
            <person name="Khouri H.M."/>
            <person name="Craven B."/>
            <person name="Bowman C."/>
            <person name="Dodson R.J."/>
            <person name="Gwinn M.L."/>
            <person name="Nelson W.C."/>
            <person name="DeBoy R.T."/>
            <person name="Kolonay J.F."/>
            <person name="McClarty G."/>
            <person name="Salzberg S.L."/>
            <person name="Eisen J.A."/>
            <person name="Fraser C.M."/>
        </authorList>
    </citation>
    <scope>NUCLEOTIDE SEQUENCE [LARGE SCALE GENOMIC DNA]</scope>
    <source>
        <strain>MoPn / Nigg</strain>
    </source>
</reference>
<dbReference type="EC" id="2.5.1.145" evidence="1"/>
<dbReference type="EMBL" id="AE002160">
    <property type="protein sequence ID" value="AAF39365.1"/>
    <property type="status" value="ALT_INIT"/>
    <property type="molecule type" value="Genomic_DNA"/>
</dbReference>
<dbReference type="PIR" id="H81692">
    <property type="entry name" value="H81692"/>
</dbReference>
<dbReference type="RefSeq" id="WP_010230677.1">
    <property type="nucleotide sequence ID" value="NZ_CP063055.1"/>
</dbReference>
<dbReference type="SMR" id="Q9PKE2"/>
<dbReference type="GeneID" id="1245883"/>
<dbReference type="KEGG" id="cmu:TC_0523"/>
<dbReference type="eggNOG" id="COG0682">
    <property type="taxonomic scope" value="Bacteria"/>
</dbReference>
<dbReference type="HOGENOM" id="CLU_013386_1_0_0"/>
<dbReference type="OrthoDB" id="871140at2"/>
<dbReference type="UniPathway" id="UPA00664"/>
<dbReference type="Proteomes" id="UP000000800">
    <property type="component" value="Chromosome"/>
</dbReference>
<dbReference type="GO" id="GO:0005886">
    <property type="term" value="C:plasma membrane"/>
    <property type="evidence" value="ECO:0007669"/>
    <property type="project" value="UniProtKB-SubCell"/>
</dbReference>
<dbReference type="GO" id="GO:0008961">
    <property type="term" value="F:phosphatidylglycerol-prolipoprotein diacylglyceryl transferase activity"/>
    <property type="evidence" value="ECO:0007669"/>
    <property type="project" value="UniProtKB-UniRule"/>
</dbReference>
<dbReference type="GO" id="GO:0042158">
    <property type="term" value="P:lipoprotein biosynthetic process"/>
    <property type="evidence" value="ECO:0007669"/>
    <property type="project" value="UniProtKB-UniRule"/>
</dbReference>
<dbReference type="HAMAP" id="MF_01147">
    <property type="entry name" value="Lgt"/>
    <property type="match status" value="1"/>
</dbReference>
<dbReference type="InterPro" id="IPR001640">
    <property type="entry name" value="Lgt"/>
</dbReference>
<dbReference type="NCBIfam" id="NF000775">
    <property type="entry name" value="PRK00052.2-5"/>
    <property type="match status" value="1"/>
</dbReference>
<dbReference type="PANTHER" id="PTHR30589:SF0">
    <property type="entry name" value="PHOSPHATIDYLGLYCEROL--PROLIPOPROTEIN DIACYLGLYCERYL TRANSFERASE"/>
    <property type="match status" value="1"/>
</dbReference>
<dbReference type="PANTHER" id="PTHR30589">
    <property type="entry name" value="PROLIPOPROTEIN DIACYLGLYCERYL TRANSFERASE"/>
    <property type="match status" value="1"/>
</dbReference>
<dbReference type="Pfam" id="PF01790">
    <property type="entry name" value="LGT"/>
    <property type="match status" value="1"/>
</dbReference>
<dbReference type="PROSITE" id="PS01311">
    <property type="entry name" value="LGT"/>
    <property type="match status" value="1"/>
</dbReference>